<organism>
    <name type="scientific">Quercus palustris</name>
    <name type="common">Pin oak</name>
    <dbReference type="NCBI Taxonomy" id="73152"/>
    <lineage>
        <taxon>Eukaryota</taxon>
        <taxon>Viridiplantae</taxon>
        <taxon>Streptophyta</taxon>
        <taxon>Embryophyta</taxon>
        <taxon>Tracheophyta</taxon>
        <taxon>Spermatophyta</taxon>
        <taxon>Magnoliopsida</taxon>
        <taxon>eudicotyledons</taxon>
        <taxon>Gunneridae</taxon>
        <taxon>Pentapetalae</taxon>
        <taxon>rosids</taxon>
        <taxon>fabids</taxon>
        <taxon>Fagales</taxon>
        <taxon>Fagaceae</taxon>
        <taxon>Quercus</taxon>
    </lineage>
</organism>
<comment type="function">
    <text evidence="1">Usually encoded in the trnK tRNA gene intron. Probably assists in splicing its own and other chloroplast group II introns.</text>
</comment>
<comment type="subcellular location">
    <subcellularLocation>
        <location>Plastid</location>
        <location>Chloroplast</location>
    </subcellularLocation>
</comment>
<comment type="similarity">
    <text evidence="1">Belongs to the intron maturase 2 family. MatK subfamily.</text>
</comment>
<name>MATK_QUEPA</name>
<proteinExistence type="inferred from homology"/>
<dbReference type="EMBL" id="AB125040">
    <property type="protein sequence ID" value="BAD14103.1"/>
    <property type="molecule type" value="Genomic_DNA"/>
</dbReference>
<dbReference type="GO" id="GO:0009507">
    <property type="term" value="C:chloroplast"/>
    <property type="evidence" value="ECO:0007669"/>
    <property type="project" value="UniProtKB-SubCell"/>
</dbReference>
<dbReference type="GO" id="GO:0003723">
    <property type="term" value="F:RNA binding"/>
    <property type="evidence" value="ECO:0007669"/>
    <property type="project" value="UniProtKB-KW"/>
</dbReference>
<dbReference type="GO" id="GO:0006397">
    <property type="term" value="P:mRNA processing"/>
    <property type="evidence" value="ECO:0007669"/>
    <property type="project" value="UniProtKB-KW"/>
</dbReference>
<dbReference type="GO" id="GO:0008380">
    <property type="term" value="P:RNA splicing"/>
    <property type="evidence" value="ECO:0007669"/>
    <property type="project" value="UniProtKB-UniRule"/>
</dbReference>
<dbReference type="GO" id="GO:0008033">
    <property type="term" value="P:tRNA processing"/>
    <property type="evidence" value="ECO:0007669"/>
    <property type="project" value="UniProtKB-KW"/>
</dbReference>
<dbReference type="HAMAP" id="MF_01390">
    <property type="entry name" value="MatK"/>
    <property type="match status" value="1"/>
</dbReference>
<dbReference type="InterPro" id="IPR024937">
    <property type="entry name" value="Domain_X"/>
</dbReference>
<dbReference type="InterPro" id="IPR002866">
    <property type="entry name" value="Maturase_MatK"/>
</dbReference>
<dbReference type="InterPro" id="IPR024942">
    <property type="entry name" value="Maturase_MatK_N"/>
</dbReference>
<dbReference type="PANTHER" id="PTHR34811">
    <property type="entry name" value="MATURASE K"/>
    <property type="match status" value="1"/>
</dbReference>
<dbReference type="PANTHER" id="PTHR34811:SF1">
    <property type="entry name" value="MATURASE K"/>
    <property type="match status" value="1"/>
</dbReference>
<dbReference type="Pfam" id="PF01348">
    <property type="entry name" value="Intron_maturas2"/>
    <property type="match status" value="1"/>
</dbReference>
<dbReference type="Pfam" id="PF01824">
    <property type="entry name" value="MatK_N"/>
    <property type="match status" value="1"/>
</dbReference>
<reference key="1">
    <citation type="journal article" date="2003" name="Tropics">
        <title>Phylogeny and genetic variation of Fagaceae in tropical montane forests.</title>
        <authorList>
            <person name="Kamiya K."/>
            <person name="Harada K."/>
            <person name="Ogino K."/>
            <person name="Mahani M.C."/>
            <person name="Latiff A."/>
        </authorList>
    </citation>
    <scope>NUCLEOTIDE SEQUENCE [GENOMIC DNA]</scope>
</reference>
<keyword id="KW-0150">Chloroplast</keyword>
<keyword id="KW-0507">mRNA processing</keyword>
<keyword id="KW-0934">Plastid</keyword>
<keyword id="KW-0694">RNA-binding</keyword>
<keyword id="KW-0819">tRNA processing</keyword>
<feature type="chain" id="PRO_0000143664" description="Maturase K">
    <location>
        <begin position="1"/>
        <end position="504"/>
    </location>
</feature>
<accession>Q75VA9</accession>
<evidence type="ECO:0000255" key="1">
    <source>
        <dbReference type="HAMAP-Rule" id="MF_01390"/>
    </source>
</evidence>
<sequence length="504" mass="59435">MEEFQGYLELDRFQQHDFLYPLIFREYSYALAHGHGLNRYMLLENIGYDNKSSLLIVKRLITTMYQQNYLKISANDSKQNPFFGYNKNLHSKILSEGFAIIVEIPFYLRLISSLEGAEIVRFYNLRSIHSIFPFLEEKFPHLNYSADILIPYPAHLEILVQTLRYRVKDASYLHLLRFFLHEYSNCNSLIITNKSISIFSKSNPRFFLFLYNSYICEYESIFLFLRNQPSHLRLTSSGVLFERLCLYRKIEHFAEVFSNDFPVIPCFLKDPFMHYVRYQGKSILASKDTPLLMNKWKSYLVNLWQCHFDVWSHAASIRINQLSKHSLDFLSYFSSVRRNPAVVRNQMLENSFLLNNAPNKLDTMVPIIPLIGSLAKAKFCNAVGHPISKLTRADLSDFEIINRFLHICRNLSHYYSGSSKKKNMYRIKYILRLSCVKTLARKHKSTARAFLKRVDLEFFQEFFTEEGGFISLIFPRASFALRRLYSGRVWYLDIIFINGLSNHE</sequence>
<protein>
    <recommendedName>
        <fullName evidence="1">Maturase K</fullName>
    </recommendedName>
    <alternativeName>
        <fullName evidence="1">Intron maturase</fullName>
    </alternativeName>
</protein>
<geneLocation type="chloroplast"/>
<gene>
    <name evidence="1" type="primary">matK</name>
</gene>